<organismHost>
    <name type="scientific">Citrullus lanatus</name>
    <name type="common">Watermelon</name>
    <name type="synonym">Citrullus vulgaris</name>
    <dbReference type="NCBI Taxonomy" id="3654"/>
</organismHost>
<organismHost>
    <name type="scientific">Cucumis melo</name>
    <name type="common">Muskmelon</name>
    <dbReference type="NCBI Taxonomy" id="3656"/>
</organismHost>
<organismHost>
    <name type="scientific">Cucumis sativus</name>
    <name type="common">Cucumber</name>
    <dbReference type="NCBI Taxonomy" id="3659"/>
</organismHost>
<organismHost>
    <name type="scientific">Cucurbita pepo</name>
    <name type="common">Vegetable marrow</name>
    <name type="synonym">Summer squash</name>
    <dbReference type="NCBI Taxonomy" id="3663"/>
</organismHost>
<sequence>RTGSCANGDDIILAVKGEDVWLYDTLSASFAELGLNYNFDERTKKREELWFMSHQAMLVDGIYIPKLEPERIVSILEWDRSKELMHRTEAICAAMIEAWGYTELLQEIRKFYLWLLSKDEFKELAASGKAPYIAETALRKLYTNVNTQPNELQRYLEVLDFNHIDGCCESVSLQSGKETVENLDAGKESKKETSDKGNKPQNSQVGQGSKEPTKTGTVSKDVNVGSKGKEVPRLQKITKKMNLPTVGGKIILGLDHLLEYKPNQVDLFNTRATKTQFESWYSAVKVEYDLNDEQMGVIMNGFMVWCIDNGTSPDVNGVWVMMDGEEQVEYPLKPIVENAKPTLRQIMHHFSDAAEAYIEMRNSESPYMPRYGLLRNLRDRELARYAFDFYEVTSKTPNRAREAIAQMKAAALAGINSRLFGLDGNISTNSENTERHTARDVNQNMHTLLGMGPPQ</sequence>
<accession>Q89251</accession>
<evidence type="ECO:0000250" key="1"/>
<evidence type="ECO:0000250" key="2">
    <source>
        <dbReference type="UniProtKB" id="P04517"/>
    </source>
</evidence>
<evidence type="ECO:0000255" key="3">
    <source>
        <dbReference type="PROSITE-ProRule" id="PRU00539"/>
    </source>
</evidence>
<evidence type="ECO:0000256" key="4">
    <source>
        <dbReference type="SAM" id="MobiDB-lite"/>
    </source>
</evidence>
<evidence type="ECO:0000305" key="5"/>
<organism>
    <name type="scientific">Watermelon mosaic virus II (isolate Tonga)</name>
    <name type="common">Vanilla necrosis potyvirus</name>
    <name type="synonym">VNV</name>
    <dbReference type="NCBI Taxonomy" id="148359"/>
    <lineage>
        <taxon>Viruses</taxon>
        <taxon>Riboviria</taxon>
        <taxon>Orthornavirae</taxon>
        <taxon>Pisuviricota</taxon>
        <taxon>Stelpaviricetes</taxon>
        <taxon>Patatavirales</taxon>
        <taxon>Potyviridae</taxon>
        <taxon>Potyvirus</taxon>
        <taxon>Potyvirus citrulli</taxon>
        <taxon>Watermelon mosaic virus</taxon>
    </lineage>
</organism>
<dbReference type="EC" id="2.7.7.48"/>
<dbReference type="EMBL" id="L22907">
    <property type="protein sequence ID" value="AAA48497.2"/>
    <property type="status" value="ALT_INIT"/>
    <property type="molecule type" value="Genomic_RNA"/>
</dbReference>
<dbReference type="SMR" id="Q89251"/>
<dbReference type="GO" id="GO:0019028">
    <property type="term" value="C:viral capsid"/>
    <property type="evidence" value="ECO:0007669"/>
    <property type="project" value="UniProtKB-KW"/>
</dbReference>
<dbReference type="GO" id="GO:0003723">
    <property type="term" value="F:RNA binding"/>
    <property type="evidence" value="ECO:0007669"/>
    <property type="project" value="InterPro"/>
</dbReference>
<dbReference type="GO" id="GO:0003968">
    <property type="term" value="F:RNA-directed RNA polymerase activity"/>
    <property type="evidence" value="ECO:0007669"/>
    <property type="project" value="UniProtKB-KW"/>
</dbReference>
<dbReference type="GO" id="GO:0006351">
    <property type="term" value="P:DNA-templated transcription"/>
    <property type="evidence" value="ECO:0007669"/>
    <property type="project" value="InterPro"/>
</dbReference>
<dbReference type="InterPro" id="IPR043502">
    <property type="entry name" value="DNA/RNA_pol_sf"/>
</dbReference>
<dbReference type="InterPro" id="IPR001592">
    <property type="entry name" value="Poty_coat"/>
</dbReference>
<dbReference type="InterPro" id="IPR001205">
    <property type="entry name" value="RNA-dir_pol_C"/>
</dbReference>
<dbReference type="Pfam" id="PF00767">
    <property type="entry name" value="Poty_coat"/>
    <property type="match status" value="1"/>
</dbReference>
<dbReference type="Pfam" id="PF00680">
    <property type="entry name" value="RdRP_1"/>
    <property type="match status" value="1"/>
</dbReference>
<dbReference type="SUPFAM" id="SSF56672">
    <property type="entry name" value="DNA/RNA polymerases"/>
    <property type="match status" value="1"/>
</dbReference>
<protein>
    <recommendedName>
        <fullName>Genome polyprotein</fullName>
    </recommendedName>
    <component>
        <recommendedName>
            <fullName>Nuclear inclusion protein B</fullName>
            <shortName>NI-B</shortName>
            <shortName>NIB</shortName>
        </recommendedName>
        <alternativeName>
            <fullName>RNA-directed RNA polymerase</fullName>
            <ecNumber>2.7.7.48</ecNumber>
        </alternativeName>
    </component>
    <component>
        <recommendedName>
            <fullName>Capsid protein</fullName>
            <shortName>CP</shortName>
        </recommendedName>
        <alternativeName>
            <fullName>Coat protein</fullName>
        </alternativeName>
    </component>
</protein>
<comment type="function">
    <molecule>Nuclear inclusion protein B</molecule>
    <text>An RNA-dependent RNA polymerase that plays an essential role in the virus replication.</text>
</comment>
<comment type="function">
    <molecule>Capsid protein</molecule>
    <text evidence="2">Involved in aphid transmission, cell-to-cell and systemis movement, encapsidation of the viral RNA and in the regulation of viral RNA amplification.</text>
</comment>
<comment type="catalytic activity">
    <reaction evidence="3">
        <text>RNA(n) + a ribonucleoside 5'-triphosphate = RNA(n+1) + diphosphate</text>
        <dbReference type="Rhea" id="RHEA:21248"/>
        <dbReference type="Rhea" id="RHEA-COMP:14527"/>
        <dbReference type="Rhea" id="RHEA-COMP:17342"/>
        <dbReference type="ChEBI" id="CHEBI:33019"/>
        <dbReference type="ChEBI" id="CHEBI:61557"/>
        <dbReference type="ChEBI" id="CHEBI:140395"/>
        <dbReference type="EC" id="2.7.7.48"/>
    </reaction>
</comment>
<comment type="subcellular location">
    <molecule>Capsid protein</molecule>
    <subcellularLocation>
        <location evidence="5">Virion</location>
    </subcellularLocation>
</comment>
<comment type="PTM">
    <text evidence="1">Genome polyprotein of potyviruses undergoes post-translational proteolytic processing by the main proteinase NIa-pro resulting in the production of at least ten individual proteins. The P1 proteinase and the HC-pro cleave only their respective C-termini autocatalytically. 6K1 is essential for proper proteolytic separation of P3 from CI (By similarity).</text>
</comment>
<comment type="similarity">
    <text evidence="5">Belongs to the potyviridae genome polyprotein family.</text>
</comment>
<comment type="sequence caution" evidence="5">
    <conflict type="erroneous initiation">
        <sequence resource="EMBL-CDS" id="AAA48497"/>
    </conflict>
</comment>
<name>POLG_WMV2T</name>
<keyword id="KW-0167">Capsid protein</keyword>
<keyword id="KW-0548">Nucleotidyltransferase</keyword>
<keyword id="KW-0696">RNA-directed RNA polymerase</keyword>
<keyword id="KW-0808">Transferase</keyword>
<keyword id="KW-0693">Viral RNA replication</keyword>
<keyword id="KW-0946">Virion</keyword>
<proteinExistence type="inferred from homology"/>
<feature type="chain" id="PRO_0000040495" description="Nuclear inclusion protein B" evidence="1">
    <location>
        <begin position="1" status="less than"/>
        <end position="174"/>
    </location>
</feature>
<feature type="chain" id="PRO_0000420033" description="Genome polyprotein">
    <location>
        <begin position="1"/>
        <end position="455"/>
    </location>
</feature>
<feature type="chain" id="PRO_0000040496" description="Capsid protein" evidence="1">
    <location>
        <begin position="175"/>
        <end position="455"/>
    </location>
</feature>
<feature type="region of interest" description="Disordered" evidence="4">
    <location>
        <begin position="182"/>
        <end position="225"/>
    </location>
</feature>
<feature type="compositionally biased region" description="Basic and acidic residues" evidence="4">
    <location>
        <begin position="182"/>
        <end position="198"/>
    </location>
</feature>
<feature type="active site" description="For nuclear inclusion protein A activity" evidence="1">
    <location>
        <position position="5"/>
    </location>
</feature>
<feature type="site" description="Cleavage; by NIa-pro" evidence="1">
    <location>
        <begin position="174"/>
        <end position="175"/>
    </location>
</feature>
<feature type="non-terminal residue">
    <location>
        <position position="1"/>
    </location>
</feature>
<reference key="1">
    <citation type="journal article" date="1993" name="Arch. Virol.">
        <title>Nucleotide sequence, serology and symtomology suggest that vanilla necrosis potyvirus is a strain of watermelon mosaic virus II.</title>
        <authorList>
            <person name="Wang Y.Y."/>
            <person name="Beck D.L."/>
            <person name="Gardner R.C."/>
            <person name="Pearson M.N."/>
        </authorList>
    </citation>
    <scope>NUCLEOTIDE SEQUENCE [GENOMIC RNA]</scope>
</reference>
<reference key="2">
    <citation type="journal article" date="2001" name="Virus Res.">
        <title>Potyvirus proteins: a wealth of functions.</title>
        <authorList>
            <person name="Urcuqui-Inchima S."/>
            <person name="Haenni A.L."/>
            <person name="Bernardi F."/>
        </authorList>
    </citation>
    <scope>REVIEW</scope>
</reference>